<dbReference type="EMBL" id="DQ977211">
    <property type="protein sequence ID" value="ABM54257.1"/>
    <property type="molecule type" value="Genomic_DNA"/>
</dbReference>
<dbReference type="RefSeq" id="XP_003825811.1">
    <property type="nucleotide sequence ID" value="XM_003825763.4"/>
</dbReference>
<dbReference type="SMR" id="A1YG32"/>
<dbReference type="STRING" id="9597.ENSPPAP00000015317"/>
<dbReference type="GlyCosmos" id="A1YG32">
    <property type="glycosylation" value="2 sites, No reported glycans"/>
</dbReference>
<dbReference type="Ensembl" id="ENSPPAT00000038007.1">
    <property type="protein sequence ID" value="ENSPPAP00000015317.1"/>
    <property type="gene ID" value="ENSPPAG00000030800.1"/>
</dbReference>
<dbReference type="GeneID" id="100975486"/>
<dbReference type="KEGG" id="pps:100975486"/>
<dbReference type="CTD" id="54407"/>
<dbReference type="eggNOG" id="KOG1305">
    <property type="taxonomic scope" value="Eukaryota"/>
</dbReference>
<dbReference type="GeneTree" id="ENSGT00940000155486"/>
<dbReference type="OMA" id="DSIHHQR"/>
<dbReference type="OrthoDB" id="13958at9604"/>
<dbReference type="Proteomes" id="UP000240080">
    <property type="component" value="Chromosome 12"/>
</dbReference>
<dbReference type="Bgee" id="ENSPPAG00000030800">
    <property type="expression patterns" value="Expressed in liver and 6 other cell types or tissues"/>
</dbReference>
<dbReference type="GO" id="GO:0005737">
    <property type="term" value="C:cytoplasm"/>
    <property type="evidence" value="ECO:0007669"/>
    <property type="project" value="Ensembl"/>
</dbReference>
<dbReference type="GO" id="GO:0005886">
    <property type="term" value="C:plasma membrane"/>
    <property type="evidence" value="ECO:0000250"/>
    <property type="project" value="UniProtKB"/>
</dbReference>
<dbReference type="GO" id="GO:0015172">
    <property type="term" value="F:acidic amino acid transmembrane transporter activity"/>
    <property type="evidence" value="ECO:0000250"/>
    <property type="project" value="UniProtKB"/>
</dbReference>
<dbReference type="GO" id="GO:0015655">
    <property type="term" value="F:alanine:sodium symporter activity"/>
    <property type="evidence" value="ECO:0000250"/>
    <property type="project" value="UniProtKB"/>
</dbReference>
<dbReference type="GO" id="GO:0015171">
    <property type="term" value="F:amino acid transmembrane transporter activity"/>
    <property type="evidence" value="ECO:0000250"/>
    <property type="project" value="UniProtKB"/>
</dbReference>
<dbReference type="GO" id="GO:0005283">
    <property type="term" value="F:amino acid:sodium symporter activity"/>
    <property type="evidence" value="ECO:0000250"/>
    <property type="project" value="UniProtKB"/>
</dbReference>
<dbReference type="GO" id="GO:0015186">
    <property type="term" value="F:L-glutamine transmembrane transporter activity"/>
    <property type="evidence" value="ECO:0000250"/>
    <property type="project" value="UniProtKB"/>
</dbReference>
<dbReference type="GO" id="GO:0015175">
    <property type="term" value="F:neutral L-amino acid transmembrane transporter activity"/>
    <property type="evidence" value="ECO:0000250"/>
    <property type="project" value="UniProtKB"/>
</dbReference>
<dbReference type="GO" id="GO:0005295">
    <property type="term" value="F:neutral L-amino acid:sodium symporter activity"/>
    <property type="evidence" value="ECO:0000250"/>
    <property type="project" value="UniProtKB"/>
</dbReference>
<dbReference type="GO" id="GO:0005298">
    <property type="term" value="F:proline:sodium symporter activity"/>
    <property type="evidence" value="ECO:0000250"/>
    <property type="project" value="UniProtKB"/>
</dbReference>
<dbReference type="GO" id="GO:0032328">
    <property type="term" value="P:alanine transport"/>
    <property type="evidence" value="ECO:0000250"/>
    <property type="project" value="UniProtKB"/>
</dbReference>
<dbReference type="GO" id="GO:0043090">
    <property type="term" value="P:amino acid import"/>
    <property type="evidence" value="ECO:0000250"/>
    <property type="project" value="UniProtKB"/>
</dbReference>
<dbReference type="GO" id="GO:0006865">
    <property type="term" value="P:amino acid transport"/>
    <property type="evidence" value="ECO:0000250"/>
    <property type="project" value="UniProtKB"/>
</dbReference>
<dbReference type="GO" id="GO:1903841">
    <property type="term" value="P:cellular response to arsenite(3-)"/>
    <property type="evidence" value="ECO:0007669"/>
    <property type="project" value="Ensembl"/>
</dbReference>
<dbReference type="GO" id="GO:1903803">
    <property type="term" value="P:L-glutamine import across plasma membrane"/>
    <property type="evidence" value="ECO:0000250"/>
    <property type="project" value="UniProtKB"/>
</dbReference>
<dbReference type="GO" id="GO:1904271">
    <property type="term" value="P:L-proline import across plasma membrane"/>
    <property type="evidence" value="ECO:0000250"/>
    <property type="project" value="UniProtKB"/>
</dbReference>
<dbReference type="GO" id="GO:1903812">
    <property type="term" value="P:L-serine import across plasma membrane"/>
    <property type="evidence" value="ECO:0000250"/>
    <property type="project" value="UniProtKB"/>
</dbReference>
<dbReference type="GO" id="GO:0015804">
    <property type="term" value="P:neutral amino acid transport"/>
    <property type="evidence" value="ECO:0000250"/>
    <property type="project" value="UniProtKB"/>
</dbReference>
<dbReference type="GO" id="GO:0033120">
    <property type="term" value="P:positive regulation of RNA splicing"/>
    <property type="evidence" value="ECO:0007669"/>
    <property type="project" value="Ensembl"/>
</dbReference>
<dbReference type="GO" id="GO:0015824">
    <property type="term" value="P:proline transport"/>
    <property type="evidence" value="ECO:0000250"/>
    <property type="project" value="UniProtKB"/>
</dbReference>
<dbReference type="GO" id="GO:0080135">
    <property type="term" value="P:regulation of cellular response to stress"/>
    <property type="evidence" value="ECO:0007669"/>
    <property type="project" value="Ensembl"/>
</dbReference>
<dbReference type="GO" id="GO:1903294">
    <property type="term" value="P:regulation of glutamate secretion, neurotransmission"/>
    <property type="evidence" value="ECO:0000250"/>
    <property type="project" value="UniProtKB"/>
</dbReference>
<dbReference type="InterPro" id="IPR013057">
    <property type="entry name" value="AA_transpt_TM"/>
</dbReference>
<dbReference type="PANTHER" id="PTHR22950">
    <property type="entry name" value="AMINO ACID TRANSPORTER"/>
    <property type="match status" value="1"/>
</dbReference>
<dbReference type="PANTHER" id="PTHR22950:SF207">
    <property type="entry name" value="SODIUM-COUPLED NEUTRAL AMINO ACID SYMPORTER 2"/>
    <property type="match status" value="1"/>
</dbReference>
<dbReference type="Pfam" id="PF01490">
    <property type="entry name" value="Aa_trans"/>
    <property type="match status" value="1"/>
</dbReference>
<reference key="1">
    <citation type="submission" date="2006-08" db="EMBL/GenBank/DDBJ databases">
        <title>Positive selection in transcription factor genes on the human lineage.</title>
        <authorList>
            <person name="Nickel G.C."/>
            <person name="Tefft D.L."/>
            <person name="Trevarthen K."/>
            <person name="Funt J."/>
            <person name="Adams M.D."/>
        </authorList>
    </citation>
    <scope>NUCLEOTIDE SEQUENCE [GENOMIC DNA]</scope>
</reference>
<accession>A1YG32</accession>
<comment type="function">
    <text evidence="2 4">Symporter that cotransports neutral amino acids and sodium ions from the extracellular to the intracellular side of the cell membrane. The transport is pH-sensitive, Li(+)-intolerant, electrogenic, driven by the Na(+) electrochemical gradient and cotransports of neutral amino acids and sodium ions with a stoichiometry of 1:1. May function in the transport of amino acids at the blood-brain barrier (By similarity). May function in the transport of amino acids in the supply of maternal nutrients to the fetus through the placenta (By similarity). Maintains a key metabolic glutamine/glutamate balance underpinning retrograde signaling by dendritic release of the neurotransmitter glutamate (By similarity). Transports L-proline in differentiating osteoblasts for the efficient synthesis of proline-enriched proteins and provides proline essential for osteoblast differentiation and bone formation during bone development (By similarity).</text>
</comment>
<comment type="catalytic activity">
    <reaction evidence="4">
        <text>L-alanine(in) + Na(+)(in) = L-alanine(out) + Na(+)(out)</text>
        <dbReference type="Rhea" id="RHEA:29283"/>
        <dbReference type="ChEBI" id="CHEBI:29101"/>
        <dbReference type="ChEBI" id="CHEBI:57972"/>
    </reaction>
    <physiologicalReaction direction="right-to-left" evidence="4">
        <dbReference type="Rhea" id="RHEA:29285"/>
    </physiologicalReaction>
</comment>
<comment type="catalytic activity">
    <reaction evidence="4">
        <text>glycine(in) + Na(+)(in) = glycine(out) + Na(+)(out)</text>
        <dbReference type="Rhea" id="RHEA:68228"/>
        <dbReference type="ChEBI" id="CHEBI:29101"/>
        <dbReference type="ChEBI" id="CHEBI:57305"/>
    </reaction>
    <physiologicalReaction direction="right-to-left" evidence="4">
        <dbReference type="Rhea" id="RHEA:68230"/>
    </physiologicalReaction>
</comment>
<comment type="catalytic activity">
    <reaction evidence="4">
        <text>L-serine(in) + Na(+)(in) = L-serine(out) + Na(+)(out)</text>
        <dbReference type="Rhea" id="RHEA:29575"/>
        <dbReference type="ChEBI" id="CHEBI:29101"/>
        <dbReference type="ChEBI" id="CHEBI:33384"/>
    </reaction>
    <physiologicalReaction direction="right-to-left" evidence="4">
        <dbReference type="Rhea" id="RHEA:29577"/>
    </physiologicalReaction>
</comment>
<comment type="catalytic activity">
    <reaction evidence="4">
        <text>L-proline(in) + Na(+)(in) = L-proline(out) + Na(+)(out)</text>
        <dbReference type="Rhea" id="RHEA:28967"/>
        <dbReference type="ChEBI" id="CHEBI:29101"/>
        <dbReference type="ChEBI" id="CHEBI:60039"/>
    </reaction>
    <physiologicalReaction direction="right-to-left" evidence="4">
        <dbReference type="Rhea" id="RHEA:28969"/>
    </physiologicalReaction>
</comment>
<comment type="catalytic activity">
    <reaction evidence="4">
        <text>L-methionine(in) + Na(+)(in) = L-methionine(out) + Na(+)(out)</text>
        <dbReference type="Rhea" id="RHEA:68240"/>
        <dbReference type="ChEBI" id="CHEBI:29101"/>
        <dbReference type="ChEBI" id="CHEBI:57844"/>
    </reaction>
    <physiologicalReaction direction="right-to-left" evidence="4">
        <dbReference type="Rhea" id="RHEA:68242"/>
    </physiologicalReaction>
</comment>
<comment type="catalytic activity">
    <reaction evidence="4">
        <text>L-histidine(in) + Na(+)(in) = L-histidine(out) + Na(+)(out)</text>
        <dbReference type="Rhea" id="RHEA:71583"/>
        <dbReference type="ChEBI" id="CHEBI:29101"/>
        <dbReference type="ChEBI" id="CHEBI:57595"/>
    </reaction>
    <physiologicalReaction direction="right-to-left" evidence="4">
        <dbReference type="Rhea" id="RHEA:71585"/>
    </physiologicalReaction>
</comment>
<comment type="catalytic activity">
    <reaction evidence="4">
        <text>L-asparagine(in) + Na(+)(in) = L-asparagine(out) + Na(+)(out)</text>
        <dbReference type="Rhea" id="RHEA:71383"/>
        <dbReference type="ChEBI" id="CHEBI:29101"/>
        <dbReference type="ChEBI" id="CHEBI:58048"/>
    </reaction>
    <physiologicalReaction direction="right-to-left" evidence="4">
        <dbReference type="Rhea" id="RHEA:71385"/>
    </physiologicalReaction>
</comment>
<comment type="catalytic activity">
    <reaction evidence="4">
        <text>L-glutamine(in) + Na(+)(in) = L-glutamine(out) + Na(+)(out)</text>
        <dbReference type="Rhea" id="RHEA:68236"/>
        <dbReference type="ChEBI" id="CHEBI:29101"/>
        <dbReference type="ChEBI" id="CHEBI:58359"/>
    </reaction>
    <physiologicalReaction direction="right-to-left" evidence="4">
        <dbReference type="Rhea" id="RHEA:68238"/>
    </physiologicalReaction>
</comment>
<comment type="catalytic activity">
    <reaction evidence="4">
        <text>L-threonine(in) + Na(+)(in) = L-threonine(out) + Na(+)(out)</text>
        <dbReference type="Rhea" id="RHEA:69999"/>
        <dbReference type="ChEBI" id="CHEBI:29101"/>
        <dbReference type="ChEBI" id="CHEBI:57926"/>
    </reaction>
    <physiologicalReaction direction="right-to-left" evidence="4">
        <dbReference type="Rhea" id="RHEA:70001"/>
    </physiologicalReaction>
</comment>
<comment type="catalytic activity">
    <reaction evidence="4">
        <text>L-leucine(in) + Na(+)(in) = L-leucine(out) + Na(+)(out)</text>
        <dbReference type="Rhea" id="RHEA:29263"/>
        <dbReference type="ChEBI" id="CHEBI:29101"/>
        <dbReference type="ChEBI" id="CHEBI:57427"/>
    </reaction>
    <physiologicalReaction direction="right-to-left" evidence="4">
        <dbReference type="Rhea" id="RHEA:29265"/>
    </physiologicalReaction>
</comment>
<comment type="catalytic activity">
    <reaction evidence="4">
        <text>L-phenylalanine(in) + Na(+)(in) = L-phenylalanine(out) + Na(+)(out)</text>
        <dbReference type="Rhea" id="RHEA:68244"/>
        <dbReference type="ChEBI" id="CHEBI:29101"/>
        <dbReference type="ChEBI" id="CHEBI:58095"/>
    </reaction>
    <physiologicalReaction direction="right-to-left" evidence="4">
        <dbReference type="Rhea" id="RHEA:68246"/>
    </physiologicalReaction>
</comment>
<comment type="activity regulation">
    <text evidence="4">Inhibited by N-methyl-D-glucamine. Inhibited by choline. Allosteric regulation of sodium ions binding by pH.</text>
</comment>
<comment type="subcellular location">
    <subcellularLocation>
        <location evidence="4">Cell membrane</location>
        <topology evidence="4">Multi-pass membrane protein</topology>
    </subcellularLocation>
    <text evidence="4">Insulin promotes recruitment to the plasma membrane from a pool localized in the trans-Golgi network or endosomes. Enriched in the somatodendritic compartment of neurons, it is also detected at the axonal shaft but excluded from the nerve terminal.</text>
</comment>
<comment type="domain">
    <text evidence="4">The extracellular C-terminal domain controls the voltage dependence for amino acid transports activity.</text>
</comment>
<comment type="PTM">
    <text evidence="2">Polyubiquitination by NEDD4L regulates the degradation and the activity of SLC38A2.</text>
</comment>
<comment type="similarity">
    <text evidence="8">Belongs to the amino acid/polyamine transporter 2 family.</text>
</comment>
<protein>
    <recommendedName>
        <fullName evidence="3">Sodium-coupled neutral amino acid symporter 2</fullName>
    </recommendedName>
    <alternativeName>
        <fullName>Amino acid transporter A2</fullName>
    </alternativeName>
    <alternativeName>
        <fullName>Solute carrier family 38 member 2</fullName>
    </alternativeName>
    <alternativeName>
        <fullName>System A amino acid transporter 2</fullName>
    </alternativeName>
    <alternativeName>
        <fullName>System A transporter 1</fullName>
    </alternativeName>
    <alternativeName>
        <fullName>System N amino acid transporter 2</fullName>
    </alternativeName>
</protein>
<evidence type="ECO:0000250" key="1"/>
<evidence type="ECO:0000250" key="2">
    <source>
        <dbReference type="UniProtKB" id="Q8CFE6"/>
    </source>
</evidence>
<evidence type="ECO:0000250" key="3">
    <source>
        <dbReference type="UniProtKB" id="Q96QD8"/>
    </source>
</evidence>
<evidence type="ECO:0000250" key="4">
    <source>
        <dbReference type="UniProtKB" id="Q9JHE5"/>
    </source>
</evidence>
<evidence type="ECO:0000255" key="5"/>
<evidence type="ECO:0000255" key="6">
    <source>
        <dbReference type="PROSITE-ProRule" id="PRU00114"/>
    </source>
</evidence>
<evidence type="ECO:0000256" key="7">
    <source>
        <dbReference type="SAM" id="MobiDB-lite"/>
    </source>
</evidence>
<evidence type="ECO:0000305" key="8"/>
<sequence length="506" mass="56053">MKKAEMGRFNISPDEDSSSYSSNSDFNYSYPTKQAALKSHYADVDPENQNFLLESNLGKKKYETEFHPGTTSFGMSVFNLSNAIVGSGILGLSYAMANTGIALFIILLTFVSIFSLYSVHLLLKTANEGGSLLYEQLGYKAFGLVGKLAASGSITMQNIGAMSSYLFIVKYELPLVIQALTNIEDKTGLWYLNGNYLVLLVSLVVILPLSLFRNLGYLGYTSGLSLLCMVFFLIVVICKKFQVPCPVEAALIINETINTTLTQPTALVPALSHNVTENDSCRPHYFIFNSQTVYAVPILIFSFVCHPAVLPIYEELKDRSRRRMMNVSKISFFAMFLMYLLAALFGYLTFYEHVESELLHTYSSILGTDILLLIVRLAVLMAVTLTVPVVIFPIRSSVTHLLCASKDFSWWRHSLITVSILAFTNLLVIFVPTIRDIFGFIGASAASMLIFILPSAFYIKLVKKEPMKSVQKIGALFFLLSGVLVMTGSMALIVLDWVHNAPGGGH</sequence>
<organism>
    <name type="scientific">Pan paniscus</name>
    <name type="common">Pygmy chimpanzee</name>
    <name type="synonym">Bonobo</name>
    <dbReference type="NCBI Taxonomy" id="9597"/>
    <lineage>
        <taxon>Eukaryota</taxon>
        <taxon>Metazoa</taxon>
        <taxon>Chordata</taxon>
        <taxon>Craniata</taxon>
        <taxon>Vertebrata</taxon>
        <taxon>Euteleostomi</taxon>
        <taxon>Mammalia</taxon>
        <taxon>Eutheria</taxon>
        <taxon>Euarchontoglires</taxon>
        <taxon>Primates</taxon>
        <taxon>Haplorrhini</taxon>
        <taxon>Catarrhini</taxon>
        <taxon>Hominidae</taxon>
        <taxon>Pan</taxon>
    </lineage>
</organism>
<name>S38A2_PANPA</name>
<gene>
    <name evidence="3" type="primary">SLC38A2</name>
    <name type="synonym">SNAT2</name>
</gene>
<proteinExistence type="inferred from homology"/>
<keyword id="KW-0029">Amino-acid transport</keyword>
<keyword id="KW-1003">Cell membrane</keyword>
<keyword id="KW-1015">Disulfide bond</keyword>
<keyword id="KW-0325">Glycoprotein</keyword>
<keyword id="KW-0406">Ion transport</keyword>
<keyword id="KW-0472">Membrane</keyword>
<keyword id="KW-0597">Phosphoprotein</keyword>
<keyword id="KW-1185">Reference proteome</keyword>
<keyword id="KW-0915">Sodium</keyword>
<keyword id="KW-0739">Sodium transport</keyword>
<keyword id="KW-0769">Symport</keyword>
<keyword id="KW-0812">Transmembrane</keyword>
<keyword id="KW-1133">Transmembrane helix</keyword>
<keyword id="KW-0813">Transport</keyword>
<keyword id="KW-0832">Ubl conjugation</keyword>
<feature type="chain" id="PRO_0000311371" description="Sodium-coupled neutral amino acid symporter 2">
    <location>
        <begin position="1"/>
        <end position="506"/>
    </location>
</feature>
<feature type="topological domain" description="Cytoplasmic" evidence="4 5">
    <location>
        <begin position="1"/>
        <end position="76"/>
    </location>
</feature>
<feature type="transmembrane region" description="Helical" evidence="5">
    <location>
        <begin position="77"/>
        <end position="96"/>
    </location>
</feature>
<feature type="topological domain" description="Extracellular" evidence="4 5">
    <location>
        <begin position="97"/>
        <end position="102"/>
    </location>
</feature>
<feature type="transmembrane region" description="Helical" evidence="4 5">
    <location>
        <begin position="103"/>
        <end position="123"/>
    </location>
</feature>
<feature type="topological domain" description="Cytoplasmic" evidence="4 5">
    <location>
        <begin position="124"/>
        <end position="158"/>
    </location>
</feature>
<feature type="transmembrane region" description="Helical" evidence="4 5">
    <location>
        <begin position="159"/>
        <end position="177"/>
    </location>
</feature>
<feature type="topological domain" description="Extracellular" evidence="5">
    <location>
        <begin position="178"/>
        <end position="188"/>
    </location>
</feature>
<feature type="transmembrane region" description="Helical" evidence="4 5">
    <location>
        <begin position="189"/>
        <end position="209"/>
    </location>
</feature>
<feature type="topological domain" description="Cytoplasmic" evidence="4 5">
    <location>
        <begin position="210"/>
        <end position="217"/>
    </location>
</feature>
<feature type="transmembrane region" description="Helical" evidence="4 5">
    <location>
        <begin position="218"/>
        <end position="238"/>
    </location>
</feature>
<feature type="topological domain" description="Extracellular" evidence="4 5">
    <location>
        <begin position="239"/>
        <end position="292"/>
    </location>
</feature>
<feature type="transmembrane region" description="Helical" evidence="4 5">
    <location>
        <begin position="293"/>
        <end position="313"/>
    </location>
</feature>
<feature type="topological domain" description="Cytoplasmic" evidence="4 5">
    <location>
        <begin position="314"/>
        <end position="329"/>
    </location>
</feature>
<feature type="transmembrane region" description="Helical" evidence="5">
    <location>
        <begin position="330"/>
        <end position="350"/>
    </location>
</feature>
<feature type="topological domain" description="Extracellular" evidence="4 5">
    <location>
        <begin position="351"/>
        <end position="371"/>
    </location>
</feature>
<feature type="transmembrane region" description="Helical" evidence="5">
    <location>
        <begin position="372"/>
        <end position="392"/>
    </location>
</feature>
<feature type="topological domain" description="Cytoplasmic" evidence="4 5">
    <location>
        <begin position="393"/>
        <end position="413"/>
    </location>
</feature>
<feature type="transmembrane region" description="Helical" evidence="5">
    <location>
        <begin position="414"/>
        <end position="434"/>
    </location>
</feature>
<feature type="topological domain" description="Extracellular" evidence="4 5">
    <location>
        <begin position="435"/>
        <end position="436"/>
    </location>
</feature>
<feature type="transmembrane region" description="Helical" evidence="4 5">
    <location>
        <begin position="437"/>
        <end position="457"/>
    </location>
</feature>
<feature type="topological domain" description="Cytoplasmic" evidence="4 5">
    <location>
        <begin position="458"/>
        <end position="472"/>
    </location>
</feature>
<feature type="transmembrane region" description="Helical" evidence="4 5">
    <location>
        <begin position="473"/>
        <end position="495"/>
    </location>
</feature>
<feature type="topological domain" description="Extracellular" evidence="4 5">
    <location>
        <begin position="496"/>
        <end position="506"/>
    </location>
</feature>
<feature type="region of interest" description="Regulates protein turnover upon amino acid deprivation" evidence="1">
    <location>
        <begin position="1"/>
        <end position="96"/>
    </location>
</feature>
<feature type="region of interest" description="Disordered" evidence="7">
    <location>
        <begin position="1"/>
        <end position="23"/>
    </location>
</feature>
<feature type="binding site" evidence="4">
    <location>
        <position position="82"/>
    </location>
    <ligand>
        <name>Na(+)</name>
        <dbReference type="ChEBI" id="CHEBI:29101"/>
    </ligand>
</feature>
<feature type="binding site" evidence="4">
    <location>
        <position position="386"/>
    </location>
    <ligand>
        <name>Na(+)</name>
        <dbReference type="ChEBI" id="CHEBI:29101"/>
    </ligand>
</feature>
<feature type="modified residue" description="Phosphoserine" evidence="3">
    <location>
        <position position="12"/>
    </location>
</feature>
<feature type="modified residue" description="Phosphoserine" evidence="2">
    <location>
        <position position="21"/>
    </location>
</feature>
<feature type="modified residue" description="Phosphoserine" evidence="3">
    <location>
        <position position="22"/>
    </location>
</feature>
<feature type="modified residue" description="Phosphoserine" evidence="3">
    <location>
        <position position="55"/>
    </location>
</feature>
<feature type="glycosylation site" description="N-linked (GlcNAc...) asparagine" evidence="5">
    <location>
        <position position="258"/>
    </location>
</feature>
<feature type="glycosylation site" description="N-linked (GlcNAc...) asparagine" evidence="5">
    <location>
        <position position="274"/>
    </location>
</feature>
<feature type="disulfide bond" evidence="6">
    <location>
        <begin position="245"/>
        <end position="281"/>
    </location>
</feature>